<protein>
    <recommendedName>
        <fullName evidence="1">Threonine/serine transporter TdcC</fullName>
    </recommendedName>
    <alternativeName>
        <fullName evidence="1">H(+)/threonine-serine symporter</fullName>
    </alternativeName>
</protein>
<keyword id="KW-0029">Amino-acid transport</keyword>
<keyword id="KW-0997">Cell inner membrane</keyword>
<keyword id="KW-1003">Cell membrane</keyword>
<keyword id="KW-0472">Membrane</keyword>
<keyword id="KW-1185">Reference proteome</keyword>
<keyword id="KW-0769">Symport</keyword>
<keyword id="KW-0812">Transmembrane</keyword>
<keyword id="KW-1133">Transmembrane helix</keyword>
<keyword id="KW-0813">Transport</keyword>
<reference key="1">
    <citation type="journal article" date="2002" name="Proc. Natl. Acad. Sci. U.S.A.">
        <title>Extensive mosaic structure revealed by the complete genome sequence of uropathogenic Escherichia coli.</title>
        <authorList>
            <person name="Welch R.A."/>
            <person name="Burland V."/>
            <person name="Plunkett G. III"/>
            <person name="Redford P."/>
            <person name="Roesch P."/>
            <person name="Rasko D."/>
            <person name="Buckles E.L."/>
            <person name="Liou S.-R."/>
            <person name="Boutin A."/>
            <person name="Hackett J."/>
            <person name="Stroud D."/>
            <person name="Mayhew G.F."/>
            <person name="Rose D.J."/>
            <person name="Zhou S."/>
            <person name="Schwartz D.C."/>
            <person name="Perna N.T."/>
            <person name="Mobley H.L.T."/>
            <person name="Donnenberg M.S."/>
            <person name="Blattner F.R."/>
        </authorList>
    </citation>
    <scope>NUCLEOTIDE SEQUENCE [LARGE SCALE GENOMIC DNA]</scope>
    <source>
        <strain>CFT073 / ATCC 700928 / UPEC</strain>
    </source>
</reference>
<proteinExistence type="inferred from homology"/>
<gene>
    <name evidence="1" type="primary">tdcC</name>
    <name type="ordered locus">c3874</name>
</gene>
<feature type="chain" id="PRO_0000309166" description="Threonine/serine transporter TdcC">
    <location>
        <begin position="1"/>
        <end position="443"/>
    </location>
</feature>
<feature type="transmembrane region" description="Helical" evidence="1">
    <location>
        <begin position="22"/>
        <end position="42"/>
    </location>
</feature>
<feature type="transmembrane region" description="Helical" evidence="1">
    <location>
        <begin position="44"/>
        <end position="64"/>
    </location>
</feature>
<feature type="transmembrane region" description="Helical" evidence="1">
    <location>
        <begin position="97"/>
        <end position="117"/>
    </location>
</feature>
<feature type="transmembrane region" description="Helical" evidence="1">
    <location>
        <begin position="140"/>
        <end position="160"/>
    </location>
</feature>
<feature type="transmembrane region" description="Helical" evidence="1">
    <location>
        <begin position="163"/>
        <end position="183"/>
    </location>
</feature>
<feature type="transmembrane region" description="Helical" evidence="1">
    <location>
        <begin position="207"/>
        <end position="227"/>
    </location>
</feature>
<feature type="transmembrane region" description="Helical" evidence="1">
    <location>
        <begin position="261"/>
        <end position="281"/>
    </location>
</feature>
<feature type="transmembrane region" description="Helical" evidence="1">
    <location>
        <begin position="311"/>
        <end position="331"/>
    </location>
</feature>
<feature type="transmembrane region" description="Helical" evidence="1">
    <location>
        <begin position="366"/>
        <end position="386"/>
    </location>
</feature>
<feature type="transmembrane region" description="Helical" evidence="1">
    <location>
        <begin position="389"/>
        <end position="409"/>
    </location>
</feature>
<feature type="transmembrane region" description="Helical" evidence="1">
    <location>
        <begin position="423"/>
        <end position="443"/>
    </location>
</feature>
<comment type="function">
    <text evidence="1">Involved in the import of threonine and serine into the cell, with the concomitant import of a proton (symport system).</text>
</comment>
<comment type="catalytic activity">
    <reaction evidence="1">
        <text>L-threonine(in) + H(+)(in) = L-threonine(out) + H(+)(out)</text>
        <dbReference type="Rhea" id="RHEA:28883"/>
        <dbReference type="ChEBI" id="CHEBI:15378"/>
        <dbReference type="ChEBI" id="CHEBI:57926"/>
    </reaction>
    <physiologicalReaction direction="right-to-left" evidence="1">
        <dbReference type="Rhea" id="RHEA:28885"/>
    </physiologicalReaction>
</comment>
<comment type="catalytic activity">
    <reaction evidence="1">
        <text>L-serine(in) + H(+)(in) = L-serine(out) + H(+)(out)</text>
        <dbReference type="Rhea" id="RHEA:28887"/>
        <dbReference type="ChEBI" id="CHEBI:15378"/>
        <dbReference type="ChEBI" id="CHEBI:33384"/>
    </reaction>
    <physiologicalReaction direction="right-to-left" evidence="1">
        <dbReference type="Rhea" id="RHEA:28889"/>
    </physiologicalReaction>
</comment>
<comment type="subcellular location">
    <subcellularLocation>
        <location evidence="1">Cell inner membrane</location>
        <topology evidence="1">Multi-pass membrane protein</topology>
    </subcellularLocation>
</comment>
<comment type="similarity">
    <text evidence="1">Belongs to the amino acid/polyamine transporter 2 family. SdaC/TdcC subfamily.</text>
</comment>
<evidence type="ECO:0000255" key="1">
    <source>
        <dbReference type="HAMAP-Rule" id="MF_01583"/>
    </source>
</evidence>
<organism>
    <name type="scientific">Escherichia coli O6:H1 (strain CFT073 / ATCC 700928 / UPEC)</name>
    <dbReference type="NCBI Taxonomy" id="199310"/>
    <lineage>
        <taxon>Bacteria</taxon>
        <taxon>Pseudomonadati</taxon>
        <taxon>Pseudomonadota</taxon>
        <taxon>Gammaproteobacteria</taxon>
        <taxon>Enterobacterales</taxon>
        <taxon>Enterobacteriaceae</taxon>
        <taxon>Escherichia</taxon>
    </lineage>
</organism>
<accession>Q8FDC3</accession>
<sequence>MSTSDSIVSSQTKQSSWRKSDTTWTLGLFGTAIGAGVLFFPIRAGFGGLIPILLMLVLAYPIAFYCHRALARLCLSGSNPSGNITETVEEHFGKTGGVVITFLYFFAICPLLWIYGVTITNTFMTFWENQLGFAPLNRGFVALFLLLLMAFVIWFGKDLMVKVMSYLVWPFIASLVLISLSLIPYWNSAVIDQVDLGSLSLTGHDGILITVWLGISIMVFSFNFSPIVSSFVVSKREEYEKDFGRDFTERKCSQIISRASMLMVAVVMFFAFSCLFTLSPANMAEAKAQNIPVLSYLANHFASMTGTKTTFAITLEYAASIIALVAIFKSFFGHYLGTLEGLNGLILKFGYKGDKTKVSLGKLNTISMIFIMGSTWVVAYANPNILDLIEAMGAPIIASLLCLLPMYAIRKAPSLAKYRGRLDNVFVTVIGLLTILNIVYKLF</sequence>
<dbReference type="EMBL" id="AE014075">
    <property type="protein sequence ID" value="AAN82315.1"/>
    <property type="molecule type" value="Genomic_DNA"/>
</dbReference>
<dbReference type="RefSeq" id="WP_000107720.1">
    <property type="nucleotide sequence ID" value="NZ_CP051263.1"/>
</dbReference>
<dbReference type="SMR" id="Q8FDC3"/>
<dbReference type="STRING" id="199310.c3874"/>
<dbReference type="GeneID" id="75205075"/>
<dbReference type="KEGG" id="ecc:c3874"/>
<dbReference type="eggNOG" id="COG0814">
    <property type="taxonomic scope" value="Bacteria"/>
</dbReference>
<dbReference type="HOGENOM" id="CLU_052043_1_1_6"/>
<dbReference type="BioCyc" id="ECOL199310:C3874-MONOMER"/>
<dbReference type="Proteomes" id="UP000001410">
    <property type="component" value="Chromosome"/>
</dbReference>
<dbReference type="GO" id="GO:0005886">
    <property type="term" value="C:plasma membrane"/>
    <property type="evidence" value="ECO:0007669"/>
    <property type="project" value="UniProtKB-SubCell"/>
</dbReference>
<dbReference type="GO" id="GO:0015194">
    <property type="term" value="F:L-serine transmembrane transporter activity"/>
    <property type="evidence" value="ECO:0007669"/>
    <property type="project" value="InterPro"/>
</dbReference>
<dbReference type="GO" id="GO:0015293">
    <property type="term" value="F:symporter activity"/>
    <property type="evidence" value="ECO:0007669"/>
    <property type="project" value="UniProtKB-UniRule"/>
</dbReference>
<dbReference type="GO" id="GO:0015565">
    <property type="term" value="F:threonine efflux transmembrane transporter activity"/>
    <property type="evidence" value="ECO:0007669"/>
    <property type="project" value="InterPro"/>
</dbReference>
<dbReference type="HAMAP" id="MF_01583">
    <property type="entry name" value="Thr_Ser_transp_TdcC"/>
    <property type="match status" value="1"/>
</dbReference>
<dbReference type="InterPro" id="IPR018227">
    <property type="entry name" value="Amino_acid_transport_2"/>
</dbReference>
<dbReference type="InterPro" id="IPR004694">
    <property type="entry name" value="Hydroxy_aa_transpt"/>
</dbReference>
<dbReference type="InterPro" id="IPR023726">
    <property type="entry name" value="Thr/Ser_transpt_TdcC"/>
</dbReference>
<dbReference type="NCBIfam" id="NF010152">
    <property type="entry name" value="PRK13629.1"/>
    <property type="match status" value="1"/>
</dbReference>
<dbReference type="NCBIfam" id="TIGR00814">
    <property type="entry name" value="stp"/>
    <property type="match status" value="1"/>
</dbReference>
<dbReference type="PANTHER" id="PTHR35334">
    <property type="entry name" value="SERINE TRANSPORTER"/>
    <property type="match status" value="1"/>
</dbReference>
<dbReference type="PANTHER" id="PTHR35334:SF1">
    <property type="entry name" value="THREONINE_SERINE TRANSPORTER TDCC"/>
    <property type="match status" value="1"/>
</dbReference>
<dbReference type="Pfam" id="PF03222">
    <property type="entry name" value="Trp_Tyr_perm"/>
    <property type="match status" value="1"/>
</dbReference>
<name>TDCC_ECOL6</name>